<sequence>MSIDVNNESGTEVDEQAILDIARYALARMRIHPLSELSVIVVDTDAMEQLHIQWMDLPGPTDVMSFPMDELRPPAKDDEEPPQGLLGDIVLCPEVAKKQGEEAPTQHSMDEELQLLTVHGVLHLLGYDHEEPDEKAEMFGLQAAIVDGWRGEHGLTGASPAPTVS</sequence>
<organism>
    <name type="scientific">Streptomyces griseus subsp. griseus (strain JCM 4626 / CBS 651.72 / NBRC 13350 / KCC S-0626 / ISP 5235)</name>
    <dbReference type="NCBI Taxonomy" id="455632"/>
    <lineage>
        <taxon>Bacteria</taxon>
        <taxon>Bacillati</taxon>
        <taxon>Actinomycetota</taxon>
        <taxon>Actinomycetes</taxon>
        <taxon>Kitasatosporales</taxon>
        <taxon>Streptomycetaceae</taxon>
        <taxon>Streptomyces</taxon>
    </lineage>
</organism>
<name>YBEY_STRGG</name>
<reference key="1">
    <citation type="journal article" date="2008" name="J. Bacteriol.">
        <title>Genome sequence of the streptomycin-producing microorganism Streptomyces griseus IFO 13350.</title>
        <authorList>
            <person name="Ohnishi Y."/>
            <person name="Ishikawa J."/>
            <person name="Hara H."/>
            <person name="Suzuki H."/>
            <person name="Ikenoya M."/>
            <person name="Ikeda H."/>
            <person name="Yamashita A."/>
            <person name="Hattori M."/>
            <person name="Horinouchi S."/>
        </authorList>
    </citation>
    <scope>NUCLEOTIDE SEQUENCE [LARGE SCALE GENOMIC DNA]</scope>
    <source>
        <strain>JCM 4626 / CBS 651.72 / NBRC 13350 / KCC S-0626 / ISP 5235</strain>
    </source>
</reference>
<feature type="chain" id="PRO_1000089212" description="Endoribonuclease YbeY">
    <location>
        <begin position="1"/>
        <end position="165"/>
    </location>
</feature>
<feature type="binding site" evidence="1">
    <location>
        <position position="119"/>
    </location>
    <ligand>
        <name>Zn(2+)</name>
        <dbReference type="ChEBI" id="CHEBI:29105"/>
        <note>catalytic</note>
    </ligand>
</feature>
<feature type="binding site" evidence="1">
    <location>
        <position position="123"/>
    </location>
    <ligand>
        <name>Zn(2+)</name>
        <dbReference type="ChEBI" id="CHEBI:29105"/>
        <note>catalytic</note>
    </ligand>
</feature>
<feature type="binding site" evidence="1">
    <location>
        <position position="129"/>
    </location>
    <ligand>
        <name>Zn(2+)</name>
        <dbReference type="ChEBI" id="CHEBI:29105"/>
        <note>catalytic</note>
    </ligand>
</feature>
<proteinExistence type="inferred from homology"/>
<dbReference type="EC" id="3.1.-.-" evidence="1"/>
<dbReference type="EMBL" id="AP009493">
    <property type="protein sequence ID" value="BAG21832.1"/>
    <property type="molecule type" value="Genomic_DNA"/>
</dbReference>
<dbReference type="RefSeq" id="WP_003969265.1">
    <property type="nucleotide sequence ID" value="NC_010572.1"/>
</dbReference>
<dbReference type="SMR" id="B1VY47"/>
<dbReference type="GeneID" id="95486473"/>
<dbReference type="KEGG" id="sgr:SGR_5003"/>
<dbReference type="eggNOG" id="COG0319">
    <property type="taxonomic scope" value="Bacteria"/>
</dbReference>
<dbReference type="HOGENOM" id="CLU_106710_3_2_11"/>
<dbReference type="Proteomes" id="UP000001685">
    <property type="component" value="Chromosome"/>
</dbReference>
<dbReference type="GO" id="GO:0005737">
    <property type="term" value="C:cytoplasm"/>
    <property type="evidence" value="ECO:0007669"/>
    <property type="project" value="UniProtKB-SubCell"/>
</dbReference>
<dbReference type="GO" id="GO:0004222">
    <property type="term" value="F:metalloendopeptidase activity"/>
    <property type="evidence" value="ECO:0007669"/>
    <property type="project" value="InterPro"/>
</dbReference>
<dbReference type="GO" id="GO:0004521">
    <property type="term" value="F:RNA endonuclease activity"/>
    <property type="evidence" value="ECO:0007669"/>
    <property type="project" value="UniProtKB-UniRule"/>
</dbReference>
<dbReference type="GO" id="GO:0008270">
    <property type="term" value="F:zinc ion binding"/>
    <property type="evidence" value="ECO:0007669"/>
    <property type="project" value="UniProtKB-UniRule"/>
</dbReference>
<dbReference type="GO" id="GO:0006364">
    <property type="term" value="P:rRNA processing"/>
    <property type="evidence" value="ECO:0007669"/>
    <property type="project" value="UniProtKB-UniRule"/>
</dbReference>
<dbReference type="Gene3D" id="3.40.390.30">
    <property type="entry name" value="Metalloproteases ('zincins'), catalytic domain"/>
    <property type="match status" value="1"/>
</dbReference>
<dbReference type="HAMAP" id="MF_00009">
    <property type="entry name" value="Endoribonucl_YbeY"/>
    <property type="match status" value="1"/>
</dbReference>
<dbReference type="InterPro" id="IPR023091">
    <property type="entry name" value="MetalPrtase_cat_dom_sf_prd"/>
</dbReference>
<dbReference type="InterPro" id="IPR002036">
    <property type="entry name" value="YbeY"/>
</dbReference>
<dbReference type="InterPro" id="IPR020549">
    <property type="entry name" value="YbeY_CS"/>
</dbReference>
<dbReference type="NCBIfam" id="TIGR00043">
    <property type="entry name" value="rRNA maturation RNase YbeY"/>
    <property type="match status" value="1"/>
</dbReference>
<dbReference type="PANTHER" id="PTHR46986">
    <property type="entry name" value="ENDORIBONUCLEASE YBEY, CHLOROPLASTIC"/>
    <property type="match status" value="1"/>
</dbReference>
<dbReference type="PANTHER" id="PTHR46986:SF1">
    <property type="entry name" value="ENDORIBONUCLEASE YBEY, CHLOROPLASTIC"/>
    <property type="match status" value="1"/>
</dbReference>
<dbReference type="Pfam" id="PF02130">
    <property type="entry name" value="YbeY"/>
    <property type="match status" value="1"/>
</dbReference>
<dbReference type="SUPFAM" id="SSF55486">
    <property type="entry name" value="Metalloproteases ('zincins'), catalytic domain"/>
    <property type="match status" value="1"/>
</dbReference>
<dbReference type="PROSITE" id="PS01306">
    <property type="entry name" value="UPF0054"/>
    <property type="match status" value="1"/>
</dbReference>
<evidence type="ECO:0000255" key="1">
    <source>
        <dbReference type="HAMAP-Rule" id="MF_00009"/>
    </source>
</evidence>
<gene>
    <name evidence="1" type="primary">ybeY</name>
    <name type="ordered locus">SGR_5003</name>
</gene>
<keyword id="KW-0963">Cytoplasm</keyword>
<keyword id="KW-0255">Endonuclease</keyword>
<keyword id="KW-0378">Hydrolase</keyword>
<keyword id="KW-0479">Metal-binding</keyword>
<keyword id="KW-0540">Nuclease</keyword>
<keyword id="KW-0690">Ribosome biogenesis</keyword>
<keyword id="KW-0698">rRNA processing</keyword>
<keyword id="KW-0862">Zinc</keyword>
<comment type="function">
    <text evidence="1">Single strand-specific metallo-endoribonuclease involved in late-stage 70S ribosome quality control and in maturation of the 3' terminus of the 16S rRNA.</text>
</comment>
<comment type="cofactor">
    <cofactor evidence="1">
        <name>Zn(2+)</name>
        <dbReference type="ChEBI" id="CHEBI:29105"/>
    </cofactor>
    <text evidence="1">Binds 1 zinc ion.</text>
</comment>
<comment type="subcellular location">
    <subcellularLocation>
        <location evidence="1">Cytoplasm</location>
    </subcellularLocation>
</comment>
<comment type="similarity">
    <text evidence="1">Belongs to the endoribonuclease YbeY family.</text>
</comment>
<accession>B1VY47</accession>
<protein>
    <recommendedName>
        <fullName evidence="1">Endoribonuclease YbeY</fullName>
        <ecNumber evidence="1">3.1.-.-</ecNumber>
    </recommendedName>
</protein>